<evidence type="ECO:0000255" key="1">
    <source>
        <dbReference type="HAMAP-Rule" id="MF_00691"/>
    </source>
</evidence>
<reference key="1">
    <citation type="journal article" date="2001" name="Science">
        <title>The genome of the natural genetic engineer Agrobacterium tumefaciens C58.</title>
        <authorList>
            <person name="Wood D.W."/>
            <person name="Setubal J.C."/>
            <person name="Kaul R."/>
            <person name="Monks D.E."/>
            <person name="Kitajima J.P."/>
            <person name="Okura V.K."/>
            <person name="Zhou Y."/>
            <person name="Chen L."/>
            <person name="Wood G.E."/>
            <person name="Almeida N.F. Jr."/>
            <person name="Woo L."/>
            <person name="Chen Y."/>
            <person name="Paulsen I.T."/>
            <person name="Eisen J.A."/>
            <person name="Karp P.D."/>
            <person name="Bovee D. Sr."/>
            <person name="Chapman P."/>
            <person name="Clendenning J."/>
            <person name="Deatherage G."/>
            <person name="Gillet W."/>
            <person name="Grant C."/>
            <person name="Kutyavin T."/>
            <person name="Levy R."/>
            <person name="Li M.-J."/>
            <person name="McClelland E."/>
            <person name="Palmieri A."/>
            <person name="Raymond C."/>
            <person name="Rouse G."/>
            <person name="Saenphimmachak C."/>
            <person name="Wu Z."/>
            <person name="Romero P."/>
            <person name="Gordon D."/>
            <person name="Zhang S."/>
            <person name="Yoo H."/>
            <person name="Tao Y."/>
            <person name="Biddle P."/>
            <person name="Jung M."/>
            <person name="Krespan W."/>
            <person name="Perry M."/>
            <person name="Gordon-Kamm B."/>
            <person name="Liao L."/>
            <person name="Kim S."/>
            <person name="Hendrick C."/>
            <person name="Zhao Z.-Y."/>
            <person name="Dolan M."/>
            <person name="Chumley F."/>
            <person name="Tingey S.V."/>
            <person name="Tomb J.-F."/>
            <person name="Gordon M.P."/>
            <person name="Olson M.V."/>
            <person name="Nester E.W."/>
        </authorList>
    </citation>
    <scope>NUCLEOTIDE SEQUENCE [LARGE SCALE GENOMIC DNA]</scope>
    <source>
        <strain>C58 / ATCC 33970</strain>
    </source>
</reference>
<reference key="2">
    <citation type="journal article" date="2001" name="Science">
        <title>Genome sequence of the plant pathogen and biotechnology agent Agrobacterium tumefaciens C58.</title>
        <authorList>
            <person name="Goodner B."/>
            <person name="Hinkle G."/>
            <person name="Gattung S."/>
            <person name="Miller N."/>
            <person name="Blanchard M."/>
            <person name="Qurollo B."/>
            <person name="Goldman B.S."/>
            <person name="Cao Y."/>
            <person name="Askenazi M."/>
            <person name="Halling C."/>
            <person name="Mullin L."/>
            <person name="Houmiel K."/>
            <person name="Gordon J."/>
            <person name="Vaudin M."/>
            <person name="Iartchouk O."/>
            <person name="Epp A."/>
            <person name="Liu F."/>
            <person name="Wollam C."/>
            <person name="Allinger M."/>
            <person name="Doughty D."/>
            <person name="Scott C."/>
            <person name="Lappas C."/>
            <person name="Markelz B."/>
            <person name="Flanagan C."/>
            <person name="Crowell C."/>
            <person name="Gurson J."/>
            <person name="Lomo C."/>
            <person name="Sear C."/>
            <person name="Strub G."/>
            <person name="Cielo C."/>
            <person name="Slater S."/>
        </authorList>
    </citation>
    <scope>NUCLEOTIDE SEQUENCE [LARGE SCALE GENOMIC DNA]</scope>
    <source>
        <strain>C58 / ATCC 33970</strain>
    </source>
</reference>
<organism>
    <name type="scientific">Agrobacterium fabrum (strain C58 / ATCC 33970)</name>
    <name type="common">Agrobacterium tumefaciens (strain C58)</name>
    <dbReference type="NCBI Taxonomy" id="176299"/>
    <lineage>
        <taxon>Bacteria</taxon>
        <taxon>Pseudomonadati</taxon>
        <taxon>Pseudomonadota</taxon>
        <taxon>Alphaproteobacteria</taxon>
        <taxon>Hyphomicrobiales</taxon>
        <taxon>Rhizobiaceae</taxon>
        <taxon>Rhizobium/Agrobacterium group</taxon>
        <taxon>Agrobacterium</taxon>
        <taxon>Agrobacterium tumefaciens complex</taxon>
    </lineage>
</organism>
<gene>
    <name evidence="1" type="primary">pxpA1</name>
    <name type="ordered locus">Atu3910</name>
    <name type="ORF">AGR_L_1871</name>
</gene>
<proteinExistence type="inferred from homology"/>
<feature type="chain" id="PRO_0000184980" description="5-oxoprolinase subunit A 1">
    <location>
        <begin position="1"/>
        <end position="255"/>
    </location>
</feature>
<protein>
    <recommendedName>
        <fullName evidence="1">5-oxoprolinase subunit A 1</fullName>
        <shortName evidence="1">5-OPase subunit A 1</shortName>
        <ecNumber evidence="1">3.5.2.9</ecNumber>
    </recommendedName>
    <alternativeName>
        <fullName evidence="1">5-oxoprolinase (ATP-hydrolyzing) subunit A 1</fullName>
    </alternativeName>
</protein>
<keyword id="KW-0067">ATP-binding</keyword>
<keyword id="KW-0378">Hydrolase</keyword>
<keyword id="KW-0547">Nucleotide-binding</keyword>
<keyword id="KW-1185">Reference proteome</keyword>
<comment type="function">
    <text evidence="1">Catalyzes the cleavage of 5-oxoproline to form L-glutamate coupled to the hydrolysis of ATP to ADP and inorganic phosphate.</text>
</comment>
<comment type="catalytic activity">
    <reaction evidence="1">
        <text>5-oxo-L-proline + ATP + 2 H2O = L-glutamate + ADP + phosphate + H(+)</text>
        <dbReference type="Rhea" id="RHEA:10348"/>
        <dbReference type="ChEBI" id="CHEBI:15377"/>
        <dbReference type="ChEBI" id="CHEBI:15378"/>
        <dbReference type="ChEBI" id="CHEBI:29985"/>
        <dbReference type="ChEBI" id="CHEBI:30616"/>
        <dbReference type="ChEBI" id="CHEBI:43474"/>
        <dbReference type="ChEBI" id="CHEBI:58402"/>
        <dbReference type="ChEBI" id="CHEBI:456216"/>
        <dbReference type="EC" id="3.5.2.9"/>
    </reaction>
</comment>
<comment type="subunit">
    <text evidence="1">Forms a complex composed of PxpA, PxpB and PxpC.</text>
</comment>
<comment type="similarity">
    <text evidence="1">Belongs to the LamB/PxpA family.</text>
</comment>
<accession>Q8U920</accession>
<sequence>MAAIDLNSDLGESYGAWRMGDDEAMLAIVSSANIACGFHAGDPAGIYRTVKAAAEKGVVVGAHVSYPDRVGFGRRDLDATSEELIADVIYQIGALKGVAAAAGTTVRYVKPHGALYNRIANDAKQGQAVIDGIKAIDPSLVLMGLANAPILDLARKAGLAVVAEAFADRAYTPEGQLVSRREAGAVLHDAAKIAERMVQLAREGTLEAIDGSIIKIEAQSICVHGDSPGAVAIAQEIRRRFEADGIAIRSFASDR</sequence>
<dbReference type="EC" id="3.5.2.9" evidence="1"/>
<dbReference type="EMBL" id="AE007870">
    <property type="protein sequence ID" value="AAK89509.1"/>
    <property type="molecule type" value="Genomic_DNA"/>
</dbReference>
<dbReference type="PIR" id="AH3037">
    <property type="entry name" value="AH3037"/>
</dbReference>
<dbReference type="PIR" id="C98248">
    <property type="entry name" value="C98248"/>
</dbReference>
<dbReference type="RefSeq" id="NP_356724.1">
    <property type="nucleotide sequence ID" value="NC_003063.2"/>
</dbReference>
<dbReference type="RefSeq" id="WP_010973420.1">
    <property type="nucleotide sequence ID" value="NC_003063.2"/>
</dbReference>
<dbReference type="SMR" id="Q8U920"/>
<dbReference type="STRING" id="176299.Atu3910"/>
<dbReference type="EnsemblBacteria" id="AAK89509">
    <property type="protein sequence ID" value="AAK89509"/>
    <property type="gene ID" value="Atu3910"/>
</dbReference>
<dbReference type="GeneID" id="1135784"/>
<dbReference type="KEGG" id="atu:Atu3910"/>
<dbReference type="PATRIC" id="fig|176299.10.peg.3734"/>
<dbReference type="eggNOG" id="COG1540">
    <property type="taxonomic scope" value="Bacteria"/>
</dbReference>
<dbReference type="HOGENOM" id="CLU_069535_0_0_5"/>
<dbReference type="OrthoDB" id="9773478at2"/>
<dbReference type="PhylomeDB" id="Q8U920"/>
<dbReference type="BioCyc" id="AGRO:ATU3910-MONOMER"/>
<dbReference type="Proteomes" id="UP000000813">
    <property type="component" value="Chromosome linear"/>
</dbReference>
<dbReference type="GO" id="GO:0017168">
    <property type="term" value="F:5-oxoprolinase (ATP-hydrolyzing) activity"/>
    <property type="evidence" value="ECO:0007669"/>
    <property type="project" value="UniProtKB-UniRule"/>
</dbReference>
<dbReference type="GO" id="GO:0005524">
    <property type="term" value="F:ATP binding"/>
    <property type="evidence" value="ECO:0007669"/>
    <property type="project" value="UniProtKB-UniRule"/>
</dbReference>
<dbReference type="GO" id="GO:0005975">
    <property type="term" value="P:carbohydrate metabolic process"/>
    <property type="evidence" value="ECO:0007669"/>
    <property type="project" value="InterPro"/>
</dbReference>
<dbReference type="CDD" id="cd10787">
    <property type="entry name" value="LamB_YcsF_like"/>
    <property type="match status" value="1"/>
</dbReference>
<dbReference type="Gene3D" id="3.20.20.370">
    <property type="entry name" value="Glycoside hydrolase/deacetylase"/>
    <property type="match status" value="1"/>
</dbReference>
<dbReference type="HAMAP" id="MF_00691">
    <property type="entry name" value="PxpA"/>
    <property type="match status" value="1"/>
</dbReference>
<dbReference type="InterPro" id="IPR011330">
    <property type="entry name" value="Glyco_hydro/deAcase_b/a-brl"/>
</dbReference>
<dbReference type="InterPro" id="IPR005501">
    <property type="entry name" value="LamB/YcsF/PxpA-like"/>
</dbReference>
<dbReference type="NCBIfam" id="NF003814">
    <property type="entry name" value="PRK05406.1-3"/>
    <property type="match status" value="1"/>
</dbReference>
<dbReference type="NCBIfam" id="NF003816">
    <property type="entry name" value="PRK05406.1-5"/>
    <property type="match status" value="1"/>
</dbReference>
<dbReference type="PANTHER" id="PTHR30292:SF0">
    <property type="entry name" value="5-OXOPROLINASE SUBUNIT A"/>
    <property type="match status" value="1"/>
</dbReference>
<dbReference type="PANTHER" id="PTHR30292">
    <property type="entry name" value="UNCHARACTERIZED PROTEIN YBGL-RELATED"/>
    <property type="match status" value="1"/>
</dbReference>
<dbReference type="Pfam" id="PF03746">
    <property type="entry name" value="LamB_YcsF"/>
    <property type="match status" value="1"/>
</dbReference>
<dbReference type="SUPFAM" id="SSF88713">
    <property type="entry name" value="Glycoside hydrolase/deacetylase"/>
    <property type="match status" value="1"/>
</dbReference>
<name>PXPA1_AGRFC</name>